<dbReference type="EC" id="5.4.99.25" evidence="1"/>
<dbReference type="EMBL" id="CP000746">
    <property type="protein sequence ID" value="ABR74489.1"/>
    <property type="molecule type" value="Genomic_DNA"/>
</dbReference>
<dbReference type="RefSeq" id="WP_012072866.1">
    <property type="nucleotide sequence ID" value="NC_009655.1"/>
</dbReference>
<dbReference type="SMR" id="A6VNE2"/>
<dbReference type="STRING" id="339671.Asuc_1123"/>
<dbReference type="KEGG" id="asu:Asuc_1123"/>
<dbReference type="eggNOG" id="COG0130">
    <property type="taxonomic scope" value="Bacteria"/>
</dbReference>
<dbReference type="HOGENOM" id="CLU_032087_0_3_6"/>
<dbReference type="OrthoDB" id="9802309at2"/>
<dbReference type="Proteomes" id="UP000001114">
    <property type="component" value="Chromosome"/>
</dbReference>
<dbReference type="GO" id="GO:0003723">
    <property type="term" value="F:RNA binding"/>
    <property type="evidence" value="ECO:0007669"/>
    <property type="project" value="InterPro"/>
</dbReference>
<dbReference type="GO" id="GO:0160148">
    <property type="term" value="F:tRNA pseudouridine(55) synthase activity"/>
    <property type="evidence" value="ECO:0007669"/>
    <property type="project" value="UniProtKB-EC"/>
</dbReference>
<dbReference type="GO" id="GO:1990481">
    <property type="term" value="P:mRNA pseudouridine synthesis"/>
    <property type="evidence" value="ECO:0007669"/>
    <property type="project" value="TreeGrafter"/>
</dbReference>
<dbReference type="GO" id="GO:0031119">
    <property type="term" value="P:tRNA pseudouridine synthesis"/>
    <property type="evidence" value="ECO:0007669"/>
    <property type="project" value="UniProtKB-UniRule"/>
</dbReference>
<dbReference type="CDD" id="cd02573">
    <property type="entry name" value="PseudoU_synth_EcTruB"/>
    <property type="match status" value="1"/>
</dbReference>
<dbReference type="CDD" id="cd21152">
    <property type="entry name" value="PUA_TruB_bacterial"/>
    <property type="match status" value="1"/>
</dbReference>
<dbReference type="FunFam" id="3.30.2350.10:FF:000003">
    <property type="entry name" value="tRNA pseudouridine synthase B"/>
    <property type="match status" value="1"/>
</dbReference>
<dbReference type="Gene3D" id="3.30.2350.10">
    <property type="entry name" value="Pseudouridine synthase"/>
    <property type="match status" value="1"/>
</dbReference>
<dbReference type="Gene3D" id="2.30.130.10">
    <property type="entry name" value="PUA domain"/>
    <property type="match status" value="1"/>
</dbReference>
<dbReference type="HAMAP" id="MF_01080">
    <property type="entry name" value="TruB_bact"/>
    <property type="match status" value="1"/>
</dbReference>
<dbReference type="InterPro" id="IPR020103">
    <property type="entry name" value="PsdUridine_synth_cat_dom_sf"/>
</dbReference>
<dbReference type="InterPro" id="IPR002501">
    <property type="entry name" value="PsdUridine_synth_N"/>
</dbReference>
<dbReference type="InterPro" id="IPR015947">
    <property type="entry name" value="PUA-like_sf"/>
</dbReference>
<dbReference type="InterPro" id="IPR036974">
    <property type="entry name" value="PUA_sf"/>
</dbReference>
<dbReference type="InterPro" id="IPR014780">
    <property type="entry name" value="tRNA_psdUridine_synth_TruB"/>
</dbReference>
<dbReference type="InterPro" id="IPR015240">
    <property type="entry name" value="tRNA_sdUridine_synth_fam1_C"/>
</dbReference>
<dbReference type="InterPro" id="IPR032819">
    <property type="entry name" value="TruB_C"/>
</dbReference>
<dbReference type="NCBIfam" id="TIGR00431">
    <property type="entry name" value="TruB"/>
    <property type="match status" value="1"/>
</dbReference>
<dbReference type="PANTHER" id="PTHR13767:SF2">
    <property type="entry name" value="PSEUDOURIDYLATE SYNTHASE TRUB1"/>
    <property type="match status" value="1"/>
</dbReference>
<dbReference type="PANTHER" id="PTHR13767">
    <property type="entry name" value="TRNA-PSEUDOURIDINE SYNTHASE"/>
    <property type="match status" value="1"/>
</dbReference>
<dbReference type="Pfam" id="PF09157">
    <property type="entry name" value="TruB-C_2"/>
    <property type="match status" value="1"/>
</dbReference>
<dbReference type="Pfam" id="PF16198">
    <property type="entry name" value="TruB_C_2"/>
    <property type="match status" value="1"/>
</dbReference>
<dbReference type="Pfam" id="PF01509">
    <property type="entry name" value="TruB_N"/>
    <property type="match status" value="1"/>
</dbReference>
<dbReference type="SUPFAM" id="SSF55120">
    <property type="entry name" value="Pseudouridine synthase"/>
    <property type="match status" value="1"/>
</dbReference>
<dbReference type="SUPFAM" id="SSF88697">
    <property type="entry name" value="PUA domain-like"/>
    <property type="match status" value="1"/>
</dbReference>
<evidence type="ECO:0000255" key="1">
    <source>
        <dbReference type="HAMAP-Rule" id="MF_01080"/>
    </source>
</evidence>
<name>TRUB_ACTSZ</name>
<protein>
    <recommendedName>
        <fullName evidence="1">tRNA pseudouridine synthase B</fullName>
        <ecNumber evidence="1">5.4.99.25</ecNumber>
    </recommendedName>
    <alternativeName>
        <fullName evidence="1">tRNA pseudouridine(55) synthase</fullName>
        <shortName evidence="1">Psi55 synthase</shortName>
    </alternativeName>
    <alternativeName>
        <fullName evidence="1">tRNA pseudouridylate synthase</fullName>
    </alternativeName>
    <alternativeName>
        <fullName evidence="1">tRNA-uridine isomerase</fullName>
    </alternativeName>
</protein>
<accession>A6VNE2</accession>
<comment type="function">
    <text evidence="1">Responsible for synthesis of pseudouridine from uracil-55 in the psi GC loop of transfer RNAs.</text>
</comment>
<comment type="catalytic activity">
    <reaction evidence="1">
        <text>uridine(55) in tRNA = pseudouridine(55) in tRNA</text>
        <dbReference type="Rhea" id="RHEA:42532"/>
        <dbReference type="Rhea" id="RHEA-COMP:10101"/>
        <dbReference type="Rhea" id="RHEA-COMP:10102"/>
        <dbReference type="ChEBI" id="CHEBI:65314"/>
        <dbReference type="ChEBI" id="CHEBI:65315"/>
        <dbReference type="EC" id="5.4.99.25"/>
    </reaction>
</comment>
<comment type="similarity">
    <text evidence="1">Belongs to the pseudouridine synthase TruB family. Type 1 subfamily.</text>
</comment>
<keyword id="KW-0413">Isomerase</keyword>
<keyword id="KW-1185">Reference proteome</keyword>
<keyword id="KW-0819">tRNA processing</keyword>
<sequence>MGRRPKKRGRDIHGVFLLDKPPGMSSNDIMQKVKRLFQANKAGHTGALDPLATGMLPICLGEATKFSQFLLDADKRYLVTAKLGERTDTSDAEGQLVQTRAVNVNLTEILTALPHFRGDLMQVPTMFSALKHQGKPLYEYARAGVTVQRQARPITIFELKFIDYNAPFLTLEVHCSKGTYIRTLIDDLGEHLGCGAHVVMLRRTAVSDYPAEKMLTWEALQQLAESADLSRLDALLLPTDSAVSKLPPLVLNEQQTKAVGFGQRIRFNNEENIYGQVRLFSAENLFLGVAEINKDNVIRPTRMVNRNNGTE</sequence>
<feature type="chain" id="PRO_1000149814" description="tRNA pseudouridine synthase B">
    <location>
        <begin position="1"/>
        <end position="311"/>
    </location>
</feature>
<feature type="active site" description="Nucleophile" evidence="1">
    <location>
        <position position="49"/>
    </location>
</feature>
<organism>
    <name type="scientific">Actinobacillus succinogenes (strain ATCC 55618 / DSM 22257 / CCUG 43843 / 130Z)</name>
    <dbReference type="NCBI Taxonomy" id="339671"/>
    <lineage>
        <taxon>Bacteria</taxon>
        <taxon>Pseudomonadati</taxon>
        <taxon>Pseudomonadota</taxon>
        <taxon>Gammaproteobacteria</taxon>
        <taxon>Pasteurellales</taxon>
        <taxon>Pasteurellaceae</taxon>
        <taxon>Actinobacillus</taxon>
    </lineage>
</organism>
<gene>
    <name evidence="1" type="primary">truB</name>
    <name type="ordered locus">Asuc_1123</name>
</gene>
<reference key="1">
    <citation type="journal article" date="2010" name="BMC Genomics">
        <title>A genomic perspective on the potential of Actinobacillus succinogenes for industrial succinate production.</title>
        <authorList>
            <person name="McKinlay J.B."/>
            <person name="Laivenieks M."/>
            <person name="Schindler B.D."/>
            <person name="McKinlay A.A."/>
            <person name="Siddaramappa S."/>
            <person name="Challacombe J.F."/>
            <person name="Lowry S.R."/>
            <person name="Clum A."/>
            <person name="Lapidus A.L."/>
            <person name="Burkhart K.B."/>
            <person name="Harkins V."/>
            <person name="Vieille C."/>
        </authorList>
    </citation>
    <scope>NUCLEOTIDE SEQUENCE [LARGE SCALE GENOMIC DNA]</scope>
    <source>
        <strain>ATCC 55618 / DSM 22257 / CCUG 43843 / 130Z</strain>
    </source>
</reference>
<proteinExistence type="inferred from homology"/>